<sequence>MLNSWPLAKDLQVLVEIVHSGSFSAAAATLGQTPAFVTKRIQILENTLATTLLNRSARGVALTESGQRCYEHALEILTQYQRLVDDVTQIKTRPEGMIRIGCSFGFGRSHIAPAITELMRNYPELQVHFELFDRQIDLVQDNIDLDIRINDAIPDYYIAHLLTKNKRILCAAPEYLQKYPQPQSLQELSRHDCLVTKERDMTHGIWELGNGQEKKSVKVSGHLSSNSGEIVLQWALEGKGIMLRSEWDVLPFLESGKLVRVLPEYAQSANIWAVYREPLYRSMKLRVCVEFLAAWCQQRLGKPDEGYQVM</sequence>
<gene>
    <name type="primary">ttdR</name>
    <name type="ordered locus">c3810</name>
</gene>
<comment type="function">
    <text evidence="1">Positive regulator required for L-tartrate-dependent anaerobic growth on glycerol. Induces expression of the ttdA-ttdB-ygjE operon (By similarity).</text>
</comment>
<comment type="similarity">
    <text evidence="3">Belongs to the LysR transcriptional regulatory family.</text>
</comment>
<comment type="sequence caution" evidence="3">
    <conflict type="erroneous initiation">
        <sequence resource="EMBL-CDS" id="AAN82255"/>
    </conflict>
</comment>
<proteinExistence type="inferred from homology"/>
<accession>Q8FDH0</accession>
<reference key="1">
    <citation type="journal article" date="2002" name="Proc. Natl. Acad. Sci. U.S.A.">
        <title>Extensive mosaic structure revealed by the complete genome sequence of uropathogenic Escherichia coli.</title>
        <authorList>
            <person name="Welch R.A."/>
            <person name="Burland V."/>
            <person name="Plunkett G. III"/>
            <person name="Redford P."/>
            <person name="Roesch P."/>
            <person name="Rasko D."/>
            <person name="Buckles E.L."/>
            <person name="Liou S.-R."/>
            <person name="Boutin A."/>
            <person name="Hackett J."/>
            <person name="Stroud D."/>
            <person name="Mayhew G.F."/>
            <person name="Rose D.J."/>
            <person name="Zhou S."/>
            <person name="Schwartz D.C."/>
            <person name="Perna N.T."/>
            <person name="Mobley H.L.T."/>
            <person name="Donnenberg M.S."/>
            <person name="Blattner F.R."/>
        </authorList>
    </citation>
    <scope>NUCLEOTIDE SEQUENCE [LARGE SCALE GENOMIC DNA]</scope>
    <source>
        <strain>CFT073 / ATCC 700928 / UPEC</strain>
    </source>
</reference>
<dbReference type="EMBL" id="AE014075">
    <property type="protein sequence ID" value="AAN82255.1"/>
    <property type="status" value="ALT_INIT"/>
    <property type="molecule type" value="Genomic_DNA"/>
</dbReference>
<dbReference type="RefSeq" id="WP_000935202.1">
    <property type="nucleotide sequence ID" value="NZ_CP051263.1"/>
</dbReference>
<dbReference type="SMR" id="Q8FDH0"/>
<dbReference type="STRING" id="199310.c3810"/>
<dbReference type="KEGG" id="ecc:c3810"/>
<dbReference type="eggNOG" id="COG0583">
    <property type="taxonomic scope" value="Bacteria"/>
</dbReference>
<dbReference type="HOGENOM" id="CLU_039613_16_4_6"/>
<dbReference type="Proteomes" id="UP000001410">
    <property type="component" value="Chromosome"/>
</dbReference>
<dbReference type="GO" id="GO:0003700">
    <property type="term" value="F:DNA-binding transcription factor activity"/>
    <property type="evidence" value="ECO:0007669"/>
    <property type="project" value="InterPro"/>
</dbReference>
<dbReference type="GO" id="GO:0043565">
    <property type="term" value="F:sequence-specific DNA binding"/>
    <property type="evidence" value="ECO:0007669"/>
    <property type="project" value="TreeGrafter"/>
</dbReference>
<dbReference type="GO" id="GO:0006351">
    <property type="term" value="P:DNA-templated transcription"/>
    <property type="evidence" value="ECO:0007669"/>
    <property type="project" value="TreeGrafter"/>
</dbReference>
<dbReference type="CDD" id="cd08479">
    <property type="entry name" value="PBP2_CrgA_like_9"/>
    <property type="match status" value="1"/>
</dbReference>
<dbReference type="FunFam" id="1.10.10.10:FF:000238">
    <property type="entry name" value="HTH-type transcriptional activator TtdR"/>
    <property type="match status" value="1"/>
</dbReference>
<dbReference type="FunFam" id="3.40.190.290:FF:000001">
    <property type="entry name" value="Transcriptional regulator, LysR family"/>
    <property type="match status" value="1"/>
</dbReference>
<dbReference type="Gene3D" id="3.40.190.290">
    <property type="match status" value="1"/>
</dbReference>
<dbReference type="Gene3D" id="1.10.10.10">
    <property type="entry name" value="Winged helix-like DNA-binding domain superfamily/Winged helix DNA-binding domain"/>
    <property type="match status" value="1"/>
</dbReference>
<dbReference type="InterPro" id="IPR005119">
    <property type="entry name" value="LysR_subst-bd"/>
</dbReference>
<dbReference type="InterPro" id="IPR000847">
    <property type="entry name" value="Tscrpt_reg_HTH_LysR"/>
</dbReference>
<dbReference type="InterPro" id="IPR036388">
    <property type="entry name" value="WH-like_DNA-bd_sf"/>
</dbReference>
<dbReference type="InterPro" id="IPR036390">
    <property type="entry name" value="WH_DNA-bd_sf"/>
</dbReference>
<dbReference type="NCBIfam" id="NF007315">
    <property type="entry name" value="PRK09801.1"/>
    <property type="match status" value="1"/>
</dbReference>
<dbReference type="PANTHER" id="PTHR30537:SF5">
    <property type="entry name" value="HTH-TYPE TRANSCRIPTIONAL ACTIVATOR TTDR-RELATED"/>
    <property type="match status" value="1"/>
</dbReference>
<dbReference type="PANTHER" id="PTHR30537">
    <property type="entry name" value="HTH-TYPE TRANSCRIPTIONAL REGULATOR"/>
    <property type="match status" value="1"/>
</dbReference>
<dbReference type="Pfam" id="PF00126">
    <property type="entry name" value="HTH_1"/>
    <property type="match status" value="1"/>
</dbReference>
<dbReference type="Pfam" id="PF03466">
    <property type="entry name" value="LysR_substrate"/>
    <property type="match status" value="1"/>
</dbReference>
<dbReference type="SUPFAM" id="SSF53850">
    <property type="entry name" value="Periplasmic binding protein-like II"/>
    <property type="match status" value="1"/>
</dbReference>
<dbReference type="SUPFAM" id="SSF46785">
    <property type="entry name" value="Winged helix' DNA-binding domain"/>
    <property type="match status" value="1"/>
</dbReference>
<dbReference type="PROSITE" id="PS50931">
    <property type="entry name" value="HTH_LYSR"/>
    <property type="match status" value="1"/>
</dbReference>
<evidence type="ECO:0000250" key="1"/>
<evidence type="ECO:0000255" key="2">
    <source>
        <dbReference type="PROSITE-ProRule" id="PRU00253"/>
    </source>
</evidence>
<evidence type="ECO:0000305" key="3"/>
<organism>
    <name type="scientific">Escherichia coli O6:H1 (strain CFT073 / ATCC 700928 / UPEC)</name>
    <dbReference type="NCBI Taxonomy" id="199310"/>
    <lineage>
        <taxon>Bacteria</taxon>
        <taxon>Pseudomonadati</taxon>
        <taxon>Pseudomonadota</taxon>
        <taxon>Gammaproteobacteria</taxon>
        <taxon>Enterobacterales</taxon>
        <taxon>Enterobacteriaceae</taxon>
        <taxon>Escherichia</taxon>
    </lineage>
</organism>
<keyword id="KW-0010">Activator</keyword>
<keyword id="KW-0238">DNA-binding</keyword>
<keyword id="KW-1185">Reference proteome</keyword>
<keyword id="KW-0804">Transcription</keyword>
<keyword id="KW-0805">Transcription regulation</keyword>
<protein>
    <recommendedName>
        <fullName>HTH-type transcriptional activator TtdR</fullName>
    </recommendedName>
</protein>
<feature type="chain" id="PRO_0000262709" description="HTH-type transcriptional activator TtdR">
    <location>
        <begin position="1"/>
        <end position="310"/>
    </location>
</feature>
<feature type="domain" description="HTH lysR-type" evidence="2">
    <location>
        <begin position="6"/>
        <end position="63"/>
    </location>
</feature>
<feature type="DNA-binding region" description="H-T-H motif" evidence="2">
    <location>
        <begin position="23"/>
        <end position="42"/>
    </location>
</feature>
<name>TTDR_ECOL6</name>